<reference key="1">
    <citation type="journal article" date="1983" name="Hoppe-Seyler's Z. Physiol. Chem.">
        <title>Primary structure of alpha and beta chains from the major hemoglobin component of the magpie goose (Anseranas semipalmata, Anatidae).</title>
        <authorList>
            <person name="Oberthur W."/>
            <person name="Wiesner H."/>
            <person name="Braunitzer G."/>
        </authorList>
    </citation>
    <scope>PROTEIN SEQUENCE OF 2-142</scope>
</reference>
<feature type="initiator methionine" description="Removed" evidence="1">
    <location>
        <position position="1"/>
    </location>
</feature>
<feature type="chain" id="PRO_0000052553" description="Hemoglobin subunit alpha-A">
    <location>
        <begin position="2"/>
        <end position="142"/>
    </location>
</feature>
<feature type="domain" description="Globin" evidence="2">
    <location>
        <begin position="2"/>
        <end position="142"/>
    </location>
</feature>
<feature type="binding site" evidence="2">
    <location>
        <position position="59"/>
    </location>
    <ligand>
        <name>O2</name>
        <dbReference type="ChEBI" id="CHEBI:15379"/>
    </ligand>
</feature>
<feature type="binding site" description="proximal binding residue" evidence="2">
    <location>
        <position position="88"/>
    </location>
    <ligand>
        <name>heme b</name>
        <dbReference type="ChEBI" id="CHEBI:60344"/>
    </ligand>
    <ligandPart>
        <name>Fe</name>
        <dbReference type="ChEBI" id="CHEBI:18248"/>
    </ligandPart>
</feature>
<dbReference type="PIR" id="A02308">
    <property type="entry name" value="HAGSM"/>
</dbReference>
<dbReference type="SMR" id="P01985"/>
<dbReference type="GO" id="GO:0072562">
    <property type="term" value="C:blood microparticle"/>
    <property type="evidence" value="ECO:0007669"/>
    <property type="project" value="TreeGrafter"/>
</dbReference>
<dbReference type="GO" id="GO:0031838">
    <property type="term" value="C:haptoglobin-hemoglobin complex"/>
    <property type="evidence" value="ECO:0007669"/>
    <property type="project" value="TreeGrafter"/>
</dbReference>
<dbReference type="GO" id="GO:0005833">
    <property type="term" value="C:hemoglobin complex"/>
    <property type="evidence" value="ECO:0007669"/>
    <property type="project" value="InterPro"/>
</dbReference>
<dbReference type="GO" id="GO:0031720">
    <property type="term" value="F:haptoglobin binding"/>
    <property type="evidence" value="ECO:0007669"/>
    <property type="project" value="TreeGrafter"/>
</dbReference>
<dbReference type="GO" id="GO:0020037">
    <property type="term" value="F:heme binding"/>
    <property type="evidence" value="ECO:0007669"/>
    <property type="project" value="InterPro"/>
</dbReference>
<dbReference type="GO" id="GO:0005506">
    <property type="term" value="F:iron ion binding"/>
    <property type="evidence" value="ECO:0007669"/>
    <property type="project" value="InterPro"/>
</dbReference>
<dbReference type="GO" id="GO:0043177">
    <property type="term" value="F:organic acid binding"/>
    <property type="evidence" value="ECO:0007669"/>
    <property type="project" value="TreeGrafter"/>
</dbReference>
<dbReference type="GO" id="GO:0019825">
    <property type="term" value="F:oxygen binding"/>
    <property type="evidence" value="ECO:0007669"/>
    <property type="project" value="InterPro"/>
</dbReference>
<dbReference type="GO" id="GO:0005344">
    <property type="term" value="F:oxygen carrier activity"/>
    <property type="evidence" value="ECO:0007669"/>
    <property type="project" value="UniProtKB-KW"/>
</dbReference>
<dbReference type="GO" id="GO:0004601">
    <property type="term" value="F:peroxidase activity"/>
    <property type="evidence" value="ECO:0007669"/>
    <property type="project" value="TreeGrafter"/>
</dbReference>
<dbReference type="GO" id="GO:0042744">
    <property type="term" value="P:hydrogen peroxide catabolic process"/>
    <property type="evidence" value="ECO:0007669"/>
    <property type="project" value="TreeGrafter"/>
</dbReference>
<dbReference type="CDD" id="cd08927">
    <property type="entry name" value="Hb-alpha-like"/>
    <property type="match status" value="1"/>
</dbReference>
<dbReference type="FunFam" id="1.10.490.10:FF:000002">
    <property type="entry name" value="Hemoglobin subunit alpha"/>
    <property type="match status" value="1"/>
</dbReference>
<dbReference type="Gene3D" id="1.10.490.10">
    <property type="entry name" value="Globins"/>
    <property type="match status" value="1"/>
</dbReference>
<dbReference type="InterPro" id="IPR000971">
    <property type="entry name" value="Globin"/>
</dbReference>
<dbReference type="InterPro" id="IPR009050">
    <property type="entry name" value="Globin-like_sf"/>
</dbReference>
<dbReference type="InterPro" id="IPR012292">
    <property type="entry name" value="Globin/Proto"/>
</dbReference>
<dbReference type="InterPro" id="IPR002338">
    <property type="entry name" value="Hemoglobin_a-typ"/>
</dbReference>
<dbReference type="InterPro" id="IPR050056">
    <property type="entry name" value="Hemoglobin_oxygen_transport"/>
</dbReference>
<dbReference type="InterPro" id="IPR002339">
    <property type="entry name" value="Hemoglobin_pi"/>
</dbReference>
<dbReference type="PANTHER" id="PTHR11442">
    <property type="entry name" value="HEMOGLOBIN FAMILY MEMBER"/>
    <property type="match status" value="1"/>
</dbReference>
<dbReference type="PANTHER" id="PTHR11442:SF48">
    <property type="entry name" value="HEMOGLOBIN SUBUNIT ALPHA"/>
    <property type="match status" value="1"/>
</dbReference>
<dbReference type="Pfam" id="PF00042">
    <property type="entry name" value="Globin"/>
    <property type="match status" value="1"/>
</dbReference>
<dbReference type="PRINTS" id="PR00612">
    <property type="entry name" value="ALPHAHAEM"/>
</dbReference>
<dbReference type="PRINTS" id="PR00815">
    <property type="entry name" value="PIHAEM"/>
</dbReference>
<dbReference type="SUPFAM" id="SSF46458">
    <property type="entry name" value="Globin-like"/>
    <property type="match status" value="1"/>
</dbReference>
<dbReference type="PROSITE" id="PS01033">
    <property type="entry name" value="GLOBIN"/>
    <property type="match status" value="1"/>
</dbReference>
<sequence length="142" mass="15466">MVLSAADKGNVKTVFGKIGGHAEEYGAETLQRMFQTFPQTKTYFPHFDLQPGSAQIKAHGKKVAAALVEAANHIDDIAGALSKLSDLHAQKLRVDPVNFKFLGHCFLVVLAIHHPSLLTPEVHASMDKFLCAVATVLTAKYR</sequence>
<name>HBA_ANSSE</name>
<accession>P01985</accession>
<comment type="function">
    <text>Involved in oxygen transport from the lung to the various peripheral tissues.</text>
</comment>
<comment type="subunit">
    <text>Heterotetramer of two alpha chains and two beta chains.</text>
</comment>
<comment type="tissue specificity">
    <text>Red blood cells.</text>
</comment>
<comment type="similarity">
    <text evidence="2">Belongs to the globin family.</text>
</comment>
<protein>
    <recommendedName>
        <fullName>Hemoglobin subunit alpha-A</fullName>
    </recommendedName>
    <alternativeName>
        <fullName>Alpha-A-globin</fullName>
    </alternativeName>
    <alternativeName>
        <fullName>Hemoglobin alpha-A chain</fullName>
    </alternativeName>
</protein>
<evidence type="ECO:0000250" key="1"/>
<evidence type="ECO:0000255" key="2">
    <source>
        <dbReference type="PROSITE-ProRule" id="PRU00238"/>
    </source>
</evidence>
<gene>
    <name type="primary">HBAA</name>
</gene>
<keyword id="KW-0903">Direct protein sequencing</keyword>
<keyword id="KW-0349">Heme</keyword>
<keyword id="KW-0408">Iron</keyword>
<keyword id="KW-0479">Metal-binding</keyword>
<keyword id="KW-0561">Oxygen transport</keyword>
<keyword id="KW-0813">Transport</keyword>
<organism>
    <name type="scientific">Anseranas semipalmata</name>
    <name type="common">Magpie goose</name>
    <name type="synonym">Anas semipalmata</name>
    <dbReference type="NCBI Taxonomy" id="8851"/>
    <lineage>
        <taxon>Eukaryota</taxon>
        <taxon>Metazoa</taxon>
        <taxon>Chordata</taxon>
        <taxon>Craniata</taxon>
        <taxon>Vertebrata</taxon>
        <taxon>Euteleostomi</taxon>
        <taxon>Archelosauria</taxon>
        <taxon>Archosauria</taxon>
        <taxon>Dinosauria</taxon>
        <taxon>Saurischia</taxon>
        <taxon>Theropoda</taxon>
        <taxon>Coelurosauria</taxon>
        <taxon>Aves</taxon>
        <taxon>Neognathae</taxon>
        <taxon>Galloanserae</taxon>
        <taxon>Anseriformes</taxon>
        <taxon>Anseranatidae</taxon>
        <taxon>Anseranas</taxon>
    </lineage>
</organism>
<proteinExistence type="evidence at protein level"/>